<gene>
    <name type="primary">SCO2</name>
</gene>
<protein>
    <recommendedName>
        <fullName>Protein SCO2 homolog, mitochondrial</fullName>
    </recommendedName>
</protein>
<organism>
    <name type="scientific">Bos taurus</name>
    <name type="common">Bovine</name>
    <dbReference type="NCBI Taxonomy" id="9913"/>
    <lineage>
        <taxon>Eukaryota</taxon>
        <taxon>Metazoa</taxon>
        <taxon>Chordata</taxon>
        <taxon>Craniata</taxon>
        <taxon>Vertebrata</taxon>
        <taxon>Euteleostomi</taxon>
        <taxon>Mammalia</taxon>
        <taxon>Eutheria</taxon>
        <taxon>Laurasiatheria</taxon>
        <taxon>Artiodactyla</taxon>
        <taxon>Ruminantia</taxon>
        <taxon>Pecora</taxon>
        <taxon>Bovidae</taxon>
        <taxon>Bovinae</taxon>
        <taxon>Bos</taxon>
    </lineage>
</organism>
<sequence length="266" mass="29789">MLLLARPPKAWHRLFQLQPLALLGTPGGKTQHVRYQLFSTPGPADTGRQGQPQGPGLRTRLLVTALVGAGLGGAWLALRAEKERGRQQQRTEALRQAAVGQGDFSLLDHRGRVRCKADFRGQWVLLYFGFTHCPDICPDELEKLVQVVRQLEAEPGLPPVQPLFITVDPERDTVAAMARYVQDFHPRLLGLTGSAEQIAQVSRSYRVYYSAGPKDEDQDYIVDHSIAIYLLSPDGLFTDYYSRARSAEQITDSVRRHMAAFRSVLR</sequence>
<evidence type="ECO:0000250" key="1">
    <source>
        <dbReference type="UniProtKB" id="O43819"/>
    </source>
</evidence>
<evidence type="ECO:0000255" key="2"/>
<evidence type="ECO:0000255" key="3">
    <source>
        <dbReference type="PROSITE-ProRule" id="PRU00691"/>
    </source>
</evidence>
<evidence type="ECO:0000305" key="4"/>
<keyword id="KW-0143">Chaperone</keyword>
<keyword id="KW-0186">Copper</keyword>
<keyword id="KW-1015">Disulfide bond</keyword>
<keyword id="KW-0472">Membrane</keyword>
<keyword id="KW-0479">Metal-binding</keyword>
<keyword id="KW-0496">Mitochondrion</keyword>
<keyword id="KW-0999">Mitochondrion inner membrane</keyword>
<keyword id="KW-1185">Reference proteome</keyword>
<keyword id="KW-0809">Transit peptide</keyword>
<keyword id="KW-0812">Transmembrane</keyword>
<keyword id="KW-1133">Transmembrane helix</keyword>
<comment type="function">
    <text evidence="1">Copper metallochaperone essential for the synthesis and maturation of cytochrome c oxidase subunit II (MT-CO2/COX2) by facilitating the incorporation of copper into the Cu(A) site of MT-CO2/COX2. Could also act as a thiol-disulfide oxidoreductase to regulate the redox state of the cysteines in SCO1 during maturation of MT-CO2/COX2.</text>
</comment>
<comment type="subunit">
    <text evidence="1">Homodimer. Interacts with COA6. Found in a complex with TMEM177, COX20, COA6, MT-CO2/COX2, COX18 and SCO1. Interacts with TMEM177 in a COX20-dependent manner. Interacts with COX20 in a MT-CO2/COX2- and COX18-dependent manner. Interacts with COX16.</text>
</comment>
<comment type="subcellular location">
    <subcellularLocation>
        <location evidence="1">Mitochondrion inner membrane</location>
        <topology evidence="2">Single-pass membrane protein</topology>
    </subcellularLocation>
</comment>
<comment type="similarity">
    <text evidence="4">Belongs to the SCO1/2 family.</text>
</comment>
<name>SCO2_BOVIN</name>
<reference key="1">
    <citation type="submission" date="2007-06" db="EMBL/GenBank/DDBJ databases">
        <authorList>
            <consortium name="NIH - Mammalian Gene Collection (MGC) project"/>
        </authorList>
    </citation>
    <scope>NUCLEOTIDE SEQUENCE [LARGE SCALE MRNA]</scope>
    <source>
        <strain>Hereford</strain>
        <tissue>Hypothalamus</tissue>
    </source>
</reference>
<feature type="transit peptide" description="Mitochondrion" evidence="2">
    <location>
        <begin position="1"/>
        <end position="41"/>
    </location>
</feature>
<feature type="chain" id="PRO_0000354067" description="Protein SCO2 homolog, mitochondrial">
    <location>
        <begin position="42"/>
        <end position="266"/>
    </location>
</feature>
<feature type="topological domain" description="Mitochondrial matrix" evidence="1">
    <location>
        <begin position="42"/>
        <end position="60"/>
    </location>
</feature>
<feature type="transmembrane region" description="Helical" evidence="2">
    <location>
        <begin position="61"/>
        <end position="78"/>
    </location>
</feature>
<feature type="topological domain" description="Mitochondrial intermembrane" evidence="1">
    <location>
        <begin position="79"/>
        <end position="266"/>
    </location>
</feature>
<feature type="domain" description="Thioredoxin" evidence="3">
    <location>
        <begin position="85"/>
        <end position="259"/>
    </location>
</feature>
<feature type="binding site" evidence="1">
    <location>
        <position position="133"/>
    </location>
    <ligand>
        <name>Cu cation</name>
        <dbReference type="ChEBI" id="CHEBI:23378"/>
    </ligand>
</feature>
<feature type="binding site" evidence="1">
    <location>
        <position position="137"/>
    </location>
    <ligand>
        <name>Cu cation</name>
        <dbReference type="ChEBI" id="CHEBI:23378"/>
    </ligand>
</feature>
<feature type="binding site" evidence="1">
    <location>
        <position position="224"/>
    </location>
    <ligand>
        <name>Cu cation</name>
        <dbReference type="ChEBI" id="CHEBI:23378"/>
    </ligand>
</feature>
<feature type="disulfide bond" description="Redox-active" evidence="3">
    <location>
        <begin position="133"/>
        <end position="137"/>
    </location>
</feature>
<proteinExistence type="evidence at transcript level"/>
<dbReference type="EMBL" id="BC146150">
    <property type="protein sequence ID" value="AAI46151.1"/>
    <property type="molecule type" value="mRNA"/>
</dbReference>
<dbReference type="RefSeq" id="NP_001098963.1">
    <property type="nucleotide sequence ID" value="NM_001105493.2"/>
</dbReference>
<dbReference type="RefSeq" id="XP_010804121.1">
    <property type="nucleotide sequence ID" value="XM_010805819.2"/>
</dbReference>
<dbReference type="RefSeq" id="XP_010804122.1">
    <property type="nucleotide sequence ID" value="XM_010805820.2"/>
</dbReference>
<dbReference type="SMR" id="A6H784"/>
<dbReference type="FunCoup" id="A6H784">
    <property type="interactions" value="764"/>
</dbReference>
<dbReference type="STRING" id="9913.ENSBTAP00000016742"/>
<dbReference type="PaxDb" id="9913-ENSBTAP00000016742"/>
<dbReference type="Ensembl" id="ENSBTAT00000016742.5">
    <property type="protein sequence ID" value="ENSBTAP00000016742.3"/>
    <property type="gene ID" value="ENSBTAG00000057697.1"/>
</dbReference>
<dbReference type="Ensembl" id="ENSBTAT00000101853.1">
    <property type="protein sequence ID" value="ENSBTAP00000094492.1"/>
    <property type="gene ID" value="ENSBTAG00000057697.1"/>
</dbReference>
<dbReference type="Ensembl" id="ENSBTAT00000105502.1">
    <property type="protein sequence ID" value="ENSBTAP00000094723.1"/>
    <property type="gene ID" value="ENSBTAG00000057697.1"/>
</dbReference>
<dbReference type="Ensembl" id="ENSBTAT00000118118.1">
    <property type="protein sequence ID" value="ENSBTAP00000077895.1"/>
    <property type="gene ID" value="ENSBTAG00000057697.1"/>
</dbReference>
<dbReference type="Ensembl" id="ENSBTAT00000118530.1">
    <property type="protein sequence ID" value="ENSBTAP00000096839.1"/>
    <property type="gene ID" value="ENSBTAG00000057697.1"/>
</dbReference>
<dbReference type="Ensembl" id="ENSBTAT00000121619.1">
    <property type="protein sequence ID" value="ENSBTAP00000077868.1"/>
    <property type="gene ID" value="ENSBTAG00000057697.1"/>
</dbReference>
<dbReference type="GeneID" id="100125923"/>
<dbReference type="KEGG" id="bta:100125923"/>
<dbReference type="CTD" id="9997"/>
<dbReference type="VEuPathDB" id="HostDB:ENSBTAG00000012609"/>
<dbReference type="eggNOG" id="KOG2792">
    <property type="taxonomic scope" value="Eukaryota"/>
</dbReference>
<dbReference type="GeneTree" id="ENSGT00390000004323"/>
<dbReference type="HOGENOM" id="CLU_050131_0_3_1"/>
<dbReference type="InParanoid" id="A6H784"/>
<dbReference type="OMA" id="YYNRMKS"/>
<dbReference type="OrthoDB" id="76676at2759"/>
<dbReference type="TreeFam" id="TF313752"/>
<dbReference type="Reactome" id="R-BTA-9864848">
    <property type="pathway name" value="Complex IV assembly"/>
</dbReference>
<dbReference type="Proteomes" id="UP000009136">
    <property type="component" value="Chromosome 5"/>
</dbReference>
<dbReference type="Bgee" id="ENSBTAG00000012609">
    <property type="expression patterns" value="Expressed in olfactory segment of nasal mucosa and 108 other cell types or tissues"/>
</dbReference>
<dbReference type="GO" id="GO:0005743">
    <property type="term" value="C:mitochondrial inner membrane"/>
    <property type="evidence" value="ECO:0000250"/>
    <property type="project" value="UniProtKB"/>
</dbReference>
<dbReference type="GO" id="GO:0030016">
    <property type="term" value="C:myofibril"/>
    <property type="evidence" value="ECO:0007669"/>
    <property type="project" value="Ensembl"/>
</dbReference>
<dbReference type="GO" id="GO:0016531">
    <property type="term" value="F:copper chaperone activity"/>
    <property type="evidence" value="ECO:0007669"/>
    <property type="project" value="InterPro"/>
</dbReference>
<dbReference type="GO" id="GO:0005507">
    <property type="term" value="F:copper ion binding"/>
    <property type="evidence" value="ECO:0007669"/>
    <property type="project" value="InterPro"/>
</dbReference>
<dbReference type="GO" id="GO:0015035">
    <property type="term" value="F:protein-disulfide reductase activity"/>
    <property type="evidence" value="ECO:0000250"/>
    <property type="project" value="UniProtKB"/>
</dbReference>
<dbReference type="GO" id="GO:0001654">
    <property type="term" value="P:eye development"/>
    <property type="evidence" value="ECO:0007669"/>
    <property type="project" value="Ensembl"/>
</dbReference>
<dbReference type="GO" id="GO:0001701">
    <property type="term" value="P:in utero embryonic development"/>
    <property type="evidence" value="ECO:0007669"/>
    <property type="project" value="Ensembl"/>
</dbReference>
<dbReference type="GO" id="GO:0006878">
    <property type="term" value="P:intracellular copper ion homeostasis"/>
    <property type="evidence" value="ECO:0007669"/>
    <property type="project" value="InterPro"/>
</dbReference>
<dbReference type="GO" id="GO:0033617">
    <property type="term" value="P:mitochondrial cytochrome c oxidase assembly"/>
    <property type="evidence" value="ECO:0000250"/>
    <property type="project" value="UniProtKB"/>
</dbReference>
<dbReference type="GO" id="GO:0003012">
    <property type="term" value="P:muscle system process"/>
    <property type="evidence" value="ECO:0007669"/>
    <property type="project" value="Ensembl"/>
</dbReference>
<dbReference type="GO" id="GO:0022904">
    <property type="term" value="P:respiratory electron transport chain"/>
    <property type="evidence" value="ECO:0007669"/>
    <property type="project" value="Ensembl"/>
</dbReference>
<dbReference type="GO" id="GO:0014823">
    <property type="term" value="P:response to activity"/>
    <property type="evidence" value="ECO:0007669"/>
    <property type="project" value="Ensembl"/>
</dbReference>
<dbReference type="CDD" id="cd02968">
    <property type="entry name" value="SCO"/>
    <property type="match status" value="1"/>
</dbReference>
<dbReference type="FunFam" id="3.40.30.10:FF:000013">
    <property type="entry name" value="Blast:Protein SCO1 homolog, mitochondrial"/>
    <property type="match status" value="1"/>
</dbReference>
<dbReference type="Gene3D" id="3.40.30.10">
    <property type="entry name" value="Glutaredoxin"/>
    <property type="match status" value="1"/>
</dbReference>
<dbReference type="InterPro" id="IPR003782">
    <property type="entry name" value="SCO1/SenC"/>
</dbReference>
<dbReference type="InterPro" id="IPR017276">
    <property type="entry name" value="Synth_of_cyt-c-oxidase_Sco1/2"/>
</dbReference>
<dbReference type="InterPro" id="IPR036249">
    <property type="entry name" value="Thioredoxin-like_sf"/>
</dbReference>
<dbReference type="InterPro" id="IPR013766">
    <property type="entry name" value="Thioredoxin_domain"/>
</dbReference>
<dbReference type="PANTHER" id="PTHR12151">
    <property type="entry name" value="ELECTRON TRANSPORT PROTIN SCO1/SENC FAMILY MEMBER"/>
    <property type="match status" value="1"/>
</dbReference>
<dbReference type="PANTHER" id="PTHR12151:SF2">
    <property type="entry name" value="PROTEIN SCO2 HOMOLOG, MITOCHONDRIAL"/>
    <property type="match status" value="1"/>
</dbReference>
<dbReference type="Pfam" id="PF02630">
    <property type="entry name" value="SCO1-SenC"/>
    <property type="match status" value="1"/>
</dbReference>
<dbReference type="PIRSF" id="PIRSF037736">
    <property type="entry name" value="SCO1"/>
    <property type="match status" value="1"/>
</dbReference>
<dbReference type="SUPFAM" id="SSF52833">
    <property type="entry name" value="Thioredoxin-like"/>
    <property type="match status" value="1"/>
</dbReference>
<dbReference type="PROSITE" id="PS51352">
    <property type="entry name" value="THIOREDOXIN_2"/>
    <property type="match status" value="1"/>
</dbReference>
<accession>A6H784</accession>